<name>RS16_ECO8A</name>
<accession>B7M978</accession>
<organism>
    <name type="scientific">Escherichia coli O8 (strain IAI1)</name>
    <dbReference type="NCBI Taxonomy" id="585034"/>
    <lineage>
        <taxon>Bacteria</taxon>
        <taxon>Pseudomonadati</taxon>
        <taxon>Pseudomonadota</taxon>
        <taxon>Gammaproteobacteria</taxon>
        <taxon>Enterobacterales</taxon>
        <taxon>Enterobacteriaceae</taxon>
        <taxon>Escherichia</taxon>
    </lineage>
</organism>
<keyword id="KW-0687">Ribonucleoprotein</keyword>
<keyword id="KW-0689">Ribosomal protein</keyword>
<feature type="chain" id="PRO_1000196404" description="Small ribosomal subunit protein bS16">
    <location>
        <begin position="1"/>
        <end position="82"/>
    </location>
</feature>
<gene>
    <name evidence="1" type="primary">rpsP</name>
    <name type="ordered locus">ECIAI1_2730</name>
</gene>
<proteinExistence type="inferred from homology"/>
<evidence type="ECO:0000255" key="1">
    <source>
        <dbReference type="HAMAP-Rule" id="MF_00385"/>
    </source>
</evidence>
<evidence type="ECO:0000305" key="2"/>
<sequence>MVTIRLARHGAKKRPFYQVVVADSRNARNGRFIERVGFFNPIASEKEEGTRLDLDRIAHWVGQGATISDRVAALIKEVNKAA</sequence>
<dbReference type="EMBL" id="CU928160">
    <property type="protein sequence ID" value="CAQ99557.1"/>
    <property type="molecule type" value="Genomic_DNA"/>
</dbReference>
<dbReference type="RefSeq" id="WP_000256450.1">
    <property type="nucleotide sequence ID" value="NC_011741.1"/>
</dbReference>
<dbReference type="SMR" id="B7M978"/>
<dbReference type="GeneID" id="93774459"/>
<dbReference type="KEGG" id="ecr:ECIAI1_2730"/>
<dbReference type="HOGENOM" id="CLU_100590_5_1_6"/>
<dbReference type="GO" id="GO:0005737">
    <property type="term" value="C:cytoplasm"/>
    <property type="evidence" value="ECO:0007669"/>
    <property type="project" value="UniProtKB-ARBA"/>
</dbReference>
<dbReference type="GO" id="GO:0015935">
    <property type="term" value="C:small ribosomal subunit"/>
    <property type="evidence" value="ECO:0007669"/>
    <property type="project" value="TreeGrafter"/>
</dbReference>
<dbReference type="GO" id="GO:0003735">
    <property type="term" value="F:structural constituent of ribosome"/>
    <property type="evidence" value="ECO:0007669"/>
    <property type="project" value="InterPro"/>
</dbReference>
<dbReference type="GO" id="GO:0006412">
    <property type="term" value="P:translation"/>
    <property type="evidence" value="ECO:0007669"/>
    <property type="project" value="UniProtKB-UniRule"/>
</dbReference>
<dbReference type="FunFam" id="3.30.1320.10:FF:000001">
    <property type="entry name" value="30S ribosomal protein S16"/>
    <property type="match status" value="1"/>
</dbReference>
<dbReference type="Gene3D" id="3.30.1320.10">
    <property type="match status" value="1"/>
</dbReference>
<dbReference type="HAMAP" id="MF_00385">
    <property type="entry name" value="Ribosomal_bS16"/>
    <property type="match status" value="1"/>
</dbReference>
<dbReference type="InterPro" id="IPR000307">
    <property type="entry name" value="Ribosomal_bS16"/>
</dbReference>
<dbReference type="InterPro" id="IPR020592">
    <property type="entry name" value="Ribosomal_bS16_CS"/>
</dbReference>
<dbReference type="InterPro" id="IPR023803">
    <property type="entry name" value="Ribosomal_bS16_dom_sf"/>
</dbReference>
<dbReference type="NCBIfam" id="TIGR00002">
    <property type="entry name" value="S16"/>
    <property type="match status" value="1"/>
</dbReference>
<dbReference type="PANTHER" id="PTHR12919">
    <property type="entry name" value="30S RIBOSOMAL PROTEIN S16"/>
    <property type="match status" value="1"/>
</dbReference>
<dbReference type="PANTHER" id="PTHR12919:SF20">
    <property type="entry name" value="SMALL RIBOSOMAL SUBUNIT PROTEIN BS16M"/>
    <property type="match status" value="1"/>
</dbReference>
<dbReference type="Pfam" id="PF00886">
    <property type="entry name" value="Ribosomal_S16"/>
    <property type="match status" value="1"/>
</dbReference>
<dbReference type="SUPFAM" id="SSF54565">
    <property type="entry name" value="Ribosomal protein S16"/>
    <property type="match status" value="1"/>
</dbReference>
<dbReference type="PROSITE" id="PS00732">
    <property type="entry name" value="RIBOSOMAL_S16"/>
    <property type="match status" value="1"/>
</dbReference>
<reference key="1">
    <citation type="journal article" date="2009" name="PLoS Genet.">
        <title>Organised genome dynamics in the Escherichia coli species results in highly diverse adaptive paths.</title>
        <authorList>
            <person name="Touchon M."/>
            <person name="Hoede C."/>
            <person name="Tenaillon O."/>
            <person name="Barbe V."/>
            <person name="Baeriswyl S."/>
            <person name="Bidet P."/>
            <person name="Bingen E."/>
            <person name="Bonacorsi S."/>
            <person name="Bouchier C."/>
            <person name="Bouvet O."/>
            <person name="Calteau A."/>
            <person name="Chiapello H."/>
            <person name="Clermont O."/>
            <person name="Cruveiller S."/>
            <person name="Danchin A."/>
            <person name="Diard M."/>
            <person name="Dossat C."/>
            <person name="Karoui M.E."/>
            <person name="Frapy E."/>
            <person name="Garry L."/>
            <person name="Ghigo J.M."/>
            <person name="Gilles A.M."/>
            <person name="Johnson J."/>
            <person name="Le Bouguenec C."/>
            <person name="Lescat M."/>
            <person name="Mangenot S."/>
            <person name="Martinez-Jehanne V."/>
            <person name="Matic I."/>
            <person name="Nassif X."/>
            <person name="Oztas S."/>
            <person name="Petit M.A."/>
            <person name="Pichon C."/>
            <person name="Rouy Z."/>
            <person name="Ruf C.S."/>
            <person name="Schneider D."/>
            <person name="Tourret J."/>
            <person name="Vacherie B."/>
            <person name="Vallenet D."/>
            <person name="Medigue C."/>
            <person name="Rocha E.P.C."/>
            <person name="Denamur E."/>
        </authorList>
    </citation>
    <scope>NUCLEOTIDE SEQUENCE [LARGE SCALE GENOMIC DNA]</scope>
    <source>
        <strain>IAI1</strain>
    </source>
</reference>
<protein>
    <recommendedName>
        <fullName evidence="1">Small ribosomal subunit protein bS16</fullName>
    </recommendedName>
    <alternativeName>
        <fullName evidence="2">30S ribosomal protein S16</fullName>
    </alternativeName>
</protein>
<comment type="similarity">
    <text evidence="1">Belongs to the bacterial ribosomal protein bS16 family.</text>
</comment>